<name>ORF11_TTVV3</name>
<organism>
    <name type="scientific">Torque teno virus (isolate Human/Finland/Hel32/2002)</name>
    <name type="common">TTV</name>
    <name type="synonym">Torque teno virus genotype 6</name>
    <dbReference type="NCBI Taxonomy" id="687342"/>
    <lineage>
        <taxon>Viruses</taxon>
        <taxon>Viruses incertae sedis</taxon>
        <taxon>Anelloviridae</taxon>
        <taxon>Alphatorquevirus</taxon>
        <taxon>Alphatorquevirus homin3</taxon>
    </lineage>
</organism>
<sequence>MAWYWWRRRRRRGWWKPRRRRWRRRRARRRGPARRHRARRRIVRHPCNGQTSSGNRVPRSVQAVDPKYVSLQLVWHSWDFRRGLFGQAGIKRMQQESDALTLSPVHRPKRPKRDTQVKEKTPEKDSDSAVQLRRLQPWIHSSQETKDEEEEIPEGPVQEQLLQQLQQQRLLRVQLESIAQEVLKIRRGHSLHPLLSSHA</sequence>
<proteinExistence type="predicted"/>
<feature type="chain" id="PRO_0000315348" description="ORF1/1 protein">
    <location>
        <begin position="1"/>
        <end position="199"/>
    </location>
</feature>
<feature type="region of interest" description="Disordered" evidence="1">
    <location>
        <begin position="96"/>
        <end position="155"/>
    </location>
</feature>
<feature type="compositionally biased region" description="Basic and acidic residues" evidence="1">
    <location>
        <begin position="113"/>
        <end position="127"/>
    </location>
</feature>
<reference key="1">
    <citation type="journal article" date="2002" name="J. Gen. Virol.">
        <title>Cloning and sequencing of TT virus genotype 6 and expression of antigenic open reading frame 2 proteins.</title>
        <authorList>
            <person name="Kakkola L."/>
            <person name="Hedman K."/>
            <person name="Vanrobaeys H."/>
            <person name="Hedman L."/>
            <person name="Soderlund-Venermo M."/>
        </authorList>
    </citation>
    <scope>NUCLEOTIDE SEQUENCE [GENOMIC DNA]</scope>
</reference>
<reference key="2">
    <citation type="journal article" date="2005" name="J. Virol.">
        <title>Human circovirus TT virus genotype 6 expresses six proteins following transfection of a full-length clone.</title>
        <authorList>
            <person name="Qiu J."/>
            <person name="Kakkola L."/>
            <person name="Cheng F."/>
            <person name="Ye C."/>
            <person name="Soderlund-Venermo M."/>
            <person name="Hedman K."/>
            <person name="Pintel D.J."/>
        </authorList>
    </citation>
    <scope>IDENTIFICATION</scope>
</reference>
<reference key="3">
    <citation type="journal article" date="2007" name="FEBS J.">
        <title>Construction and biological activity of a full-length molecular clone of human Torque teno virus (TTV) genotype 6.</title>
        <authorList>
            <person name="Kakkola L."/>
            <person name="Tommiska J."/>
            <person name="Boele L.C."/>
            <person name="Miettinen S."/>
            <person name="Blom T."/>
            <person name="Kekarainen T."/>
            <person name="Qiu J."/>
            <person name="Pintel D."/>
            <person name="Hoeben R.C."/>
            <person name="Hedman K."/>
            <person name="Soderlund-Venermo M."/>
        </authorList>
    </citation>
    <scope>INFECTIOUS CLONE</scope>
</reference>
<reference key="4">
    <citation type="journal article" date="2007" name="Rev. Med. Virol.">
        <title>Torque teno virus (TTV): current status.</title>
        <authorList>
            <person name="Hino S."/>
            <person name="Miyata H."/>
        </authorList>
    </citation>
    <scope>REVIEW</scope>
</reference>
<keyword id="KW-1185">Reference proteome</keyword>
<accession>A7XCE8</accession>
<evidence type="ECO:0000256" key="1">
    <source>
        <dbReference type="SAM" id="MobiDB-lite"/>
    </source>
</evidence>
<organismHost>
    <name type="scientific">Homo sapiens</name>
    <name type="common">Human</name>
    <dbReference type="NCBI Taxonomy" id="9606"/>
</organismHost>
<protein>
    <recommendedName>
        <fullName>ORF1/1 protein</fullName>
    </recommendedName>
</protein>
<gene>
    <name type="ORF">ORF1/1</name>
</gene>
<dbReference type="EMBL" id="AY666122">
    <property type="protein sequence ID" value="ABV25032.1"/>
    <property type="molecule type" value="Genomic_DNA"/>
</dbReference>
<dbReference type="RefSeq" id="YP_003587869.1">
    <property type="nucleotide sequence ID" value="NC_014081.1"/>
</dbReference>
<dbReference type="SMR" id="A7XCE8"/>
<dbReference type="OrthoDB" id="3295at10239"/>
<dbReference type="Proteomes" id="UP000008257">
    <property type="component" value="Segment"/>
</dbReference>